<reference key="1">
    <citation type="journal article" date="2011" name="J. Bacteriol.">
        <title>Genome of Ochrobactrum anthropi ATCC 49188 T, a versatile opportunistic pathogen and symbiont of several eukaryotic hosts.</title>
        <authorList>
            <person name="Chain P.S."/>
            <person name="Lang D.M."/>
            <person name="Comerci D.J."/>
            <person name="Malfatti S.A."/>
            <person name="Vergez L.M."/>
            <person name="Shin M."/>
            <person name="Ugalde R.A."/>
            <person name="Garcia E."/>
            <person name="Tolmasky M.E."/>
        </authorList>
    </citation>
    <scope>NUCLEOTIDE SEQUENCE [LARGE SCALE GENOMIC DNA]</scope>
    <source>
        <strain>ATCC 49188 / DSM 6882 / CCUG 24695 / JCM 21032 / LMG 3331 / NBRC 15819 / NCTC 12168 / Alc 37</strain>
    </source>
</reference>
<comment type="function">
    <text evidence="1">One of the primary rRNA binding proteins, it binds directly to 16S rRNA where it nucleates assembly of the head domain of the 30S subunit. Is located at the subunit interface close to the decoding center, probably blocks exit of the E-site tRNA.</text>
</comment>
<comment type="subunit">
    <text evidence="1">Part of the 30S ribosomal subunit. Contacts proteins S9 and S11.</text>
</comment>
<comment type="similarity">
    <text evidence="1">Belongs to the universal ribosomal protein uS7 family.</text>
</comment>
<sequence>MSRRHKAEKREINPDPKFGDLVITKFMNAVMLHGKKSVAESIVYGALDVIEAKAKSEPVALFHQALDNVAPHIEVRSRRVGGATYQVPVDVRPERRQALAIRWLINAARGRNETTMIDRLSGELLDAANNRGSAVKKREDTHRMAEANRAFSHYRW</sequence>
<name>RS7_BRUA4</name>
<feature type="chain" id="PRO_1000014247" description="Small ribosomal subunit protein uS7">
    <location>
        <begin position="1"/>
        <end position="156"/>
    </location>
</feature>
<gene>
    <name evidence="1" type="primary">rpsG</name>
    <name type="ordered locus">Oant_1952</name>
</gene>
<proteinExistence type="inferred from homology"/>
<accession>A6X0B4</accession>
<dbReference type="EMBL" id="CP000758">
    <property type="protein sequence ID" value="ABS14668.1"/>
    <property type="molecule type" value="Genomic_DNA"/>
</dbReference>
<dbReference type="RefSeq" id="WP_010659910.1">
    <property type="nucleotide sequence ID" value="NC_009667.1"/>
</dbReference>
<dbReference type="SMR" id="A6X0B4"/>
<dbReference type="STRING" id="439375.Oant_1952"/>
<dbReference type="GeneID" id="61317590"/>
<dbReference type="KEGG" id="oan:Oant_1952"/>
<dbReference type="eggNOG" id="COG0049">
    <property type="taxonomic scope" value="Bacteria"/>
</dbReference>
<dbReference type="HOGENOM" id="CLU_072226_1_1_5"/>
<dbReference type="PhylomeDB" id="A6X0B4"/>
<dbReference type="Proteomes" id="UP000002301">
    <property type="component" value="Chromosome 1"/>
</dbReference>
<dbReference type="GO" id="GO:0015935">
    <property type="term" value="C:small ribosomal subunit"/>
    <property type="evidence" value="ECO:0007669"/>
    <property type="project" value="InterPro"/>
</dbReference>
<dbReference type="GO" id="GO:0019843">
    <property type="term" value="F:rRNA binding"/>
    <property type="evidence" value="ECO:0007669"/>
    <property type="project" value="UniProtKB-UniRule"/>
</dbReference>
<dbReference type="GO" id="GO:0003735">
    <property type="term" value="F:structural constituent of ribosome"/>
    <property type="evidence" value="ECO:0007669"/>
    <property type="project" value="InterPro"/>
</dbReference>
<dbReference type="GO" id="GO:0000049">
    <property type="term" value="F:tRNA binding"/>
    <property type="evidence" value="ECO:0007669"/>
    <property type="project" value="UniProtKB-UniRule"/>
</dbReference>
<dbReference type="GO" id="GO:0006412">
    <property type="term" value="P:translation"/>
    <property type="evidence" value="ECO:0007669"/>
    <property type="project" value="UniProtKB-UniRule"/>
</dbReference>
<dbReference type="CDD" id="cd14869">
    <property type="entry name" value="uS7_Bacteria"/>
    <property type="match status" value="1"/>
</dbReference>
<dbReference type="FunFam" id="1.10.455.10:FF:000001">
    <property type="entry name" value="30S ribosomal protein S7"/>
    <property type="match status" value="1"/>
</dbReference>
<dbReference type="Gene3D" id="1.10.455.10">
    <property type="entry name" value="Ribosomal protein S7 domain"/>
    <property type="match status" value="1"/>
</dbReference>
<dbReference type="HAMAP" id="MF_00480_B">
    <property type="entry name" value="Ribosomal_uS7_B"/>
    <property type="match status" value="1"/>
</dbReference>
<dbReference type="InterPro" id="IPR000235">
    <property type="entry name" value="Ribosomal_uS7"/>
</dbReference>
<dbReference type="InterPro" id="IPR005717">
    <property type="entry name" value="Ribosomal_uS7_bac/org-type"/>
</dbReference>
<dbReference type="InterPro" id="IPR020606">
    <property type="entry name" value="Ribosomal_uS7_CS"/>
</dbReference>
<dbReference type="InterPro" id="IPR023798">
    <property type="entry name" value="Ribosomal_uS7_dom"/>
</dbReference>
<dbReference type="InterPro" id="IPR036823">
    <property type="entry name" value="Ribosomal_uS7_dom_sf"/>
</dbReference>
<dbReference type="NCBIfam" id="TIGR01029">
    <property type="entry name" value="rpsG_bact"/>
    <property type="match status" value="1"/>
</dbReference>
<dbReference type="PANTHER" id="PTHR11205">
    <property type="entry name" value="RIBOSOMAL PROTEIN S7"/>
    <property type="match status" value="1"/>
</dbReference>
<dbReference type="Pfam" id="PF00177">
    <property type="entry name" value="Ribosomal_S7"/>
    <property type="match status" value="1"/>
</dbReference>
<dbReference type="PIRSF" id="PIRSF002122">
    <property type="entry name" value="RPS7p_RPS7a_RPS5e_RPS7o"/>
    <property type="match status" value="1"/>
</dbReference>
<dbReference type="SUPFAM" id="SSF47973">
    <property type="entry name" value="Ribosomal protein S7"/>
    <property type="match status" value="1"/>
</dbReference>
<dbReference type="PROSITE" id="PS00052">
    <property type="entry name" value="RIBOSOMAL_S7"/>
    <property type="match status" value="1"/>
</dbReference>
<keyword id="KW-1185">Reference proteome</keyword>
<keyword id="KW-0687">Ribonucleoprotein</keyword>
<keyword id="KW-0689">Ribosomal protein</keyword>
<keyword id="KW-0694">RNA-binding</keyword>
<keyword id="KW-0699">rRNA-binding</keyword>
<keyword id="KW-0820">tRNA-binding</keyword>
<organism>
    <name type="scientific">Brucella anthropi (strain ATCC 49188 / DSM 6882 / CCUG 24695 / JCM 21032 / LMG 3331 / NBRC 15819 / NCTC 12168 / Alc 37)</name>
    <name type="common">Ochrobactrum anthropi</name>
    <dbReference type="NCBI Taxonomy" id="439375"/>
    <lineage>
        <taxon>Bacteria</taxon>
        <taxon>Pseudomonadati</taxon>
        <taxon>Pseudomonadota</taxon>
        <taxon>Alphaproteobacteria</taxon>
        <taxon>Hyphomicrobiales</taxon>
        <taxon>Brucellaceae</taxon>
        <taxon>Brucella/Ochrobactrum group</taxon>
        <taxon>Brucella</taxon>
    </lineage>
</organism>
<evidence type="ECO:0000255" key="1">
    <source>
        <dbReference type="HAMAP-Rule" id="MF_00480"/>
    </source>
</evidence>
<evidence type="ECO:0000305" key="2"/>
<protein>
    <recommendedName>
        <fullName evidence="1">Small ribosomal subunit protein uS7</fullName>
    </recommendedName>
    <alternativeName>
        <fullName evidence="2">30S ribosomal protein S7</fullName>
    </alternativeName>
</protein>